<keyword id="KW-0963">Cytoplasm</keyword>
<keyword id="KW-0489">Methyltransferase</keyword>
<keyword id="KW-1185">Reference proteome</keyword>
<keyword id="KW-0949">S-adenosyl-L-methionine</keyword>
<keyword id="KW-0808">Transferase</keyword>
<reference key="1">
    <citation type="journal article" date="2004" name="PLoS Biol.">
        <title>Genomic insights into methanotrophy: the complete genome sequence of Methylococcus capsulatus (Bath).</title>
        <authorList>
            <person name="Ward N.L."/>
            <person name="Larsen O."/>
            <person name="Sakwa J."/>
            <person name="Bruseth L."/>
            <person name="Khouri H.M."/>
            <person name="Durkin A.S."/>
            <person name="Dimitrov G."/>
            <person name="Jiang L."/>
            <person name="Scanlan D."/>
            <person name="Kang K.H."/>
            <person name="Lewis M.R."/>
            <person name="Nelson K.E."/>
            <person name="Methe B.A."/>
            <person name="Wu M."/>
            <person name="Heidelberg J.F."/>
            <person name="Paulsen I.T."/>
            <person name="Fouts D.E."/>
            <person name="Ravel J."/>
            <person name="Tettelin H."/>
            <person name="Ren Q."/>
            <person name="Read T.D."/>
            <person name="DeBoy R.T."/>
            <person name="Seshadri R."/>
            <person name="Salzberg S.L."/>
            <person name="Jensen H.B."/>
            <person name="Birkeland N.K."/>
            <person name="Nelson W.C."/>
            <person name="Dodson R.J."/>
            <person name="Grindhaug S.H."/>
            <person name="Holt I.E."/>
            <person name="Eidhammer I."/>
            <person name="Jonasen I."/>
            <person name="Vanaken S."/>
            <person name="Utterback T.R."/>
            <person name="Feldblyum T.V."/>
            <person name="Fraser C.M."/>
            <person name="Lillehaug J.R."/>
            <person name="Eisen J.A."/>
        </authorList>
    </citation>
    <scope>NUCLEOTIDE SEQUENCE [LARGE SCALE GENOMIC DNA]</scope>
    <source>
        <strain>ATCC 33009 / NCIMB 11132 / Bath</strain>
    </source>
</reference>
<accession>Q60A25</accession>
<feature type="chain" id="PRO_1000046046" description="Ribosomal protein L11 methyltransferase">
    <location>
        <begin position="1"/>
        <end position="293"/>
    </location>
</feature>
<feature type="binding site" evidence="1">
    <location>
        <position position="144"/>
    </location>
    <ligand>
        <name>S-adenosyl-L-methionine</name>
        <dbReference type="ChEBI" id="CHEBI:59789"/>
    </ligand>
</feature>
<feature type="binding site" evidence="1">
    <location>
        <position position="165"/>
    </location>
    <ligand>
        <name>S-adenosyl-L-methionine</name>
        <dbReference type="ChEBI" id="CHEBI:59789"/>
    </ligand>
</feature>
<feature type="binding site" evidence="1">
    <location>
        <position position="187"/>
    </location>
    <ligand>
        <name>S-adenosyl-L-methionine</name>
        <dbReference type="ChEBI" id="CHEBI:59789"/>
    </ligand>
</feature>
<feature type="binding site" evidence="1">
    <location>
        <position position="228"/>
    </location>
    <ligand>
        <name>S-adenosyl-L-methionine</name>
        <dbReference type="ChEBI" id="CHEBI:59789"/>
    </ligand>
</feature>
<comment type="function">
    <text evidence="1">Methylates ribosomal protein L11.</text>
</comment>
<comment type="catalytic activity">
    <reaction evidence="1">
        <text>L-lysyl-[protein] + 3 S-adenosyl-L-methionine = N(6),N(6),N(6)-trimethyl-L-lysyl-[protein] + 3 S-adenosyl-L-homocysteine + 3 H(+)</text>
        <dbReference type="Rhea" id="RHEA:54192"/>
        <dbReference type="Rhea" id="RHEA-COMP:9752"/>
        <dbReference type="Rhea" id="RHEA-COMP:13826"/>
        <dbReference type="ChEBI" id="CHEBI:15378"/>
        <dbReference type="ChEBI" id="CHEBI:29969"/>
        <dbReference type="ChEBI" id="CHEBI:57856"/>
        <dbReference type="ChEBI" id="CHEBI:59789"/>
        <dbReference type="ChEBI" id="CHEBI:61961"/>
    </reaction>
</comment>
<comment type="subcellular location">
    <subcellularLocation>
        <location evidence="1">Cytoplasm</location>
    </subcellularLocation>
</comment>
<comment type="similarity">
    <text evidence="1">Belongs to the methyltransferase superfamily. PrmA family.</text>
</comment>
<proteinExistence type="inferred from homology"/>
<evidence type="ECO:0000255" key="1">
    <source>
        <dbReference type="HAMAP-Rule" id="MF_00735"/>
    </source>
</evidence>
<name>PRMA_METCA</name>
<dbReference type="EC" id="2.1.1.-" evidence="1"/>
<dbReference type="EMBL" id="AE017282">
    <property type="protein sequence ID" value="AAU92846.1"/>
    <property type="molecule type" value="Genomic_DNA"/>
</dbReference>
<dbReference type="RefSeq" id="WP_010960347.1">
    <property type="nucleotide sequence ID" value="NC_002977.6"/>
</dbReference>
<dbReference type="SMR" id="Q60A25"/>
<dbReference type="STRING" id="243233.MCA1047"/>
<dbReference type="GeneID" id="88223340"/>
<dbReference type="KEGG" id="mca:MCA1047"/>
<dbReference type="eggNOG" id="COG2264">
    <property type="taxonomic scope" value="Bacteria"/>
</dbReference>
<dbReference type="HOGENOM" id="CLU_049382_4_1_6"/>
<dbReference type="Proteomes" id="UP000006821">
    <property type="component" value="Chromosome"/>
</dbReference>
<dbReference type="GO" id="GO:0005829">
    <property type="term" value="C:cytosol"/>
    <property type="evidence" value="ECO:0007669"/>
    <property type="project" value="TreeGrafter"/>
</dbReference>
<dbReference type="GO" id="GO:0016279">
    <property type="term" value="F:protein-lysine N-methyltransferase activity"/>
    <property type="evidence" value="ECO:0007669"/>
    <property type="project" value="TreeGrafter"/>
</dbReference>
<dbReference type="GO" id="GO:0032259">
    <property type="term" value="P:methylation"/>
    <property type="evidence" value="ECO:0007669"/>
    <property type="project" value="UniProtKB-KW"/>
</dbReference>
<dbReference type="CDD" id="cd02440">
    <property type="entry name" value="AdoMet_MTases"/>
    <property type="match status" value="1"/>
</dbReference>
<dbReference type="Gene3D" id="3.40.50.150">
    <property type="entry name" value="Vaccinia Virus protein VP39"/>
    <property type="match status" value="1"/>
</dbReference>
<dbReference type="HAMAP" id="MF_00735">
    <property type="entry name" value="Methyltr_PrmA"/>
    <property type="match status" value="1"/>
</dbReference>
<dbReference type="InterPro" id="IPR050078">
    <property type="entry name" value="Ribosomal_L11_MeTrfase_PrmA"/>
</dbReference>
<dbReference type="InterPro" id="IPR004498">
    <property type="entry name" value="Ribosomal_PrmA_MeTrfase"/>
</dbReference>
<dbReference type="InterPro" id="IPR029063">
    <property type="entry name" value="SAM-dependent_MTases_sf"/>
</dbReference>
<dbReference type="NCBIfam" id="TIGR00406">
    <property type="entry name" value="prmA"/>
    <property type="match status" value="1"/>
</dbReference>
<dbReference type="PANTHER" id="PTHR43648">
    <property type="entry name" value="ELECTRON TRANSFER FLAVOPROTEIN BETA SUBUNIT LYSINE METHYLTRANSFERASE"/>
    <property type="match status" value="1"/>
</dbReference>
<dbReference type="PANTHER" id="PTHR43648:SF1">
    <property type="entry name" value="ELECTRON TRANSFER FLAVOPROTEIN BETA SUBUNIT LYSINE METHYLTRANSFERASE"/>
    <property type="match status" value="1"/>
</dbReference>
<dbReference type="Pfam" id="PF06325">
    <property type="entry name" value="PrmA"/>
    <property type="match status" value="1"/>
</dbReference>
<dbReference type="PIRSF" id="PIRSF000401">
    <property type="entry name" value="RPL11_MTase"/>
    <property type="match status" value="1"/>
</dbReference>
<dbReference type="SUPFAM" id="SSF53335">
    <property type="entry name" value="S-adenosyl-L-methionine-dependent methyltransferases"/>
    <property type="match status" value="1"/>
</dbReference>
<protein>
    <recommendedName>
        <fullName evidence="1">Ribosomal protein L11 methyltransferase</fullName>
        <shortName evidence="1">L11 Mtase</shortName>
        <ecNumber evidence="1">2.1.1.-</ecNumber>
    </recommendedName>
</protein>
<organism>
    <name type="scientific">Methylococcus capsulatus (strain ATCC 33009 / NCIMB 11132 / Bath)</name>
    <dbReference type="NCBI Taxonomy" id="243233"/>
    <lineage>
        <taxon>Bacteria</taxon>
        <taxon>Pseudomonadati</taxon>
        <taxon>Pseudomonadota</taxon>
        <taxon>Gammaproteobacteria</taxon>
        <taxon>Methylococcales</taxon>
        <taxon>Methylococcaceae</taxon>
        <taxon>Methylococcus</taxon>
    </lineage>
</organism>
<sequence length="293" mass="31291">MWQQLMVTVDEDLAEDVSDALMDAGALSVSFLDAGDQPLFEPPPGTTPVWAQTRVVGLFEEGGDLAAIRSALGGRFGDERLRDWSEEALADQVWERTWLEHFRPMRFGSRLWVCPTGFTVEDTDAVVMSLDPGLAFGTGTHPTTALCLEWLDAADLQGASVLDYGCGSGILGIAAALLGAAGVHAVDIDPQALAATVENARKNRVGDRIEVASPGGLADFDSDIALANILANPLMELADALRSRVRPGGRIVLSGILAEQADAVASVYARKGFEMEPAVFREGWVRLAGVRRT</sequence>
<gene>
    <name evidence="1" type="primary">prmA</name>
    <name type="ordered locus">MCA1047</name>
</gene>